<keyword id="KW-1185">Reference proteome</keyword>
<sequence>MEFPKKAEIIAVGSELLLGQIANTNAQFISKQLAEIGVNVFYHTAVGDNPERLKQVIRIAEERSDFIIFSGGLGPTKDDLTKETIANTLGRPLVLNDEAFQSIEDYFKRTKRTMSPNNRKQALVIEGSDVLANHFGMAPGMLTEHESRYYMLLPGPPSELRPMFENEAKPLLLKKMGSNEKIVSTVLRFFGIGESQLEADLEDIIDAQTNPTIAPLAADGEVTLRLTAKHADEKETERLLKETEAVILERVGEFFYGYDDTSLVKELSIACKEKGITISAAESFTGGLFSEWLTDHSGASKLFAGGVVCYTNDVKQNVLGVKKETLDRFGAVSKECASELAKGVQKLTGSDIGISFTGVAGPDAQEGHEPGHVFIGISANGKEEVHEFHFAGSRTGIRKRGAKYGCHLILKLLEQK</sequence>
<dbReference type="EMBL" id="U56238">
    <property type="protein sequence ID" value="AAB00568.1"/>
    <property type="molecule type" value="Genomic_DNA"/>
</dbReference>
<dbReference type="EMBL" id="U87792">
    <property type="protein sequence ID" value="AAB47708.1"/>
    <property type="molecule type" value="Genomic_DNA"/>
</dbReference>
<dbReference type="EMBL" id="AL009126">
    <property type="protein sequence ID" value="CAB13566.2"/>
    <property type="molecule type" value="Genomic_DNA"/>
</dbReference>
<dbReference type="EMBL" id="D50064">
    <property type="protein sequence ID" value="BAA08782.1"/>
    <property type="molecule type" value="Genomic_DNA"/>
</dbReference>
<dbReference type="EMBL" id="X52132">
    <property type="status" value="NOT_ANNOTATED_CDS"/>
    <property type="molecule type" value="Genomic_DNA"/>
</dbReference>
<dbReference type="PIR" id="E69599">
    <property type="entry name" value="E69599"/>
</dbReference>
<dbReference type="RefSeq" id="NP_389575.2">
    <property type="nucleotide sequence ID" value="NC_000964.3"/>
</dbReference>
<dbReference type="RefSeq" id="WP_003231847.1">
    <property type="nucleotide sequence ID" value="NZ_OZ025638.1"/>
</dbReference>
<dbReference type="SMR" id="P46323"/>
<dbReference type="FunCoup" id="P46323">
    <property type="interactions" value="195"/>
</dbReference>
<dbReference type="STRING" id="224308.BSU16930"/>
<dbReference type="jPOST" id="P46323"/>
<dbReference type="PaxDb" id="224308-BSU16930"/>
<dbReference type="EnsemblBacteria" id="CAB13566">
    <property type="protein sequence ID" value="CAB13566"/>
    <property type="gene ID" value="BSU_16930"/>
</dbReference>
<dbReference type="GeneID" id="939464"/>
<dbReference type="KEGG" id="bsu:BSU16930"/>
<dbReference type="PATRIC" id="fig|224308.179.peg.1834"/>
<dbReference type="eggNOG" id="COG1058">
    <property type="taxonomic scope" value="Bacteria"/>
</dbReference>
<dbReference type="eggNOG" id="COG1546">
    <property type="taxonomic scope" value="Bacteria"/>
</dbReference>
<dbReference type="InParanoid" id="P46323"/>
<dbReference type="OrthoDB" id="9801454at2"/>
<dbReference type="PhylomeDB" id="P46323"/>
<dbReference type="BioCyc" id="BSUB:BSU16930-MONOMER"/>
<dbReference type="Proteomes" id="UP000001570">
    <property type="component" value="Chromosome"/>
</dbReference>
<dbReference type="CDD" id="cd00885">
    <property type="entry name" value="cinA"/>
    <property type="match status" value="1"/>
</dbReference>
<dbReference type="Gene3D" id="3.30.70.2860">
    <property type="match status" value="1"/>
</dbReference>
<dbReference type="Gene3D" id="3.90.950.20">
    <property type="entry name" value="CinA-like"/>
    <property type="match status" value="1"/>
</dbReference>
<dbReference type="Gene3D" id="3.40.980.10">
    <property type="entry name" value="MoaB/Mog-like domain"/>
    <property type="match status" value="1"/>
</dbReference>
<dbReference type="HAMAP" id="MF_00226_B">
    <property type="entry name" value="CinA_B"/>
    <property type="match status" value="1"/>
</dbReference>
<dbReference type="InterPro" id="IPR050101">
    <property type="entry name" value="CinA"/>
</dbReference>
<dbReference type="InterPro" id="IPR036653">
    <property type="entry name" value="CinA-like_C"/>
</dbReference>
<dbReference type="InterPro" id="IPR008136">
    <property type="entry name" value="CinA_C"/>
</dbReference>
<dbReference type="InterPro" id="IPR041424">
    <property type="entry name" value="CinA_KH"/>
</dbReference>
<dbReference type="InterPro" id="IPR008135">
    <property type="entry name" value="Competence-induced_CinA"/>
</dbReference>
<dbReference type="InterPro" id="IPR036425">
    <property type="entry name" value="MoaB/Mog-like_dom_sf"/>
</dbReference>
<dbReference type="InterPro" id="IPR001453">
    <property type="entry name" value="MoaB/Mog_dom"/>
</dbReference>
<dbReference type="NCBIfam" id="TIGR00200">
    <property type="entry name" value="cinA_nterm"/>
    <property type="match status" value="1"/>
</dbReference>
<dbReference type="NCBIfam" id="TIGR00177">
    <property type="entry name" value="molyb_syn"/>
    <property type="match status" value="1"/>
</dbReference>
<dbReference type="NCBIfam" id="TIGR00199">
    <property type="entry name" value="PncC_domain"/>
    <property type="match status" value="1"/>
</dbReference>
<dbReference type="NCBIfam" id="NF001813">
    <property type="entry name" value="PRK00549.1"/>
    <property type="match status" value="1"/>
</dbReference>
<dbReference type="PANTHER" id="PTHR13939">
    <property type="entry name" value="NICOTINAMIDE-NUCLEOTIDE AMIDOHYDROLASE PNCC"/>
    <property type="match status" value="1"/>
</dbReference>
<dbReference type="PANTHER" id="PTHR13939:SF0">
    <property type="entry name" value="NMN AMIDOHYDROLASE-LIKE PROTEIN YFAY"/>
    <property type="match status" value="1"/>
</dbReference>
<dbReference type="Pfam" id="PF02464">
    <property type="entry name" value="CinA"/>
    <property type="match status" value="1"/>
</dbReference>
<dbReference type="Pfam" id="PF18146">
    <property type="entry name" value="CinA_KH"/>
    <property type="match status" value="1"/>
</dbReference>
<dbReference type="Pfam" id="PF00994">
    <property type="entry name" value="MoCF_biosynth"/>
    <property type="match status" value="1"/>
</dbReference>
<dbReference type="PIRSF" id="PIRSF006728">
    <property type="entry name" value="CinA"/>
    <property type="match status" value="1"/>
</dbReference>
<dbReference type="SMART" id="SM00852">
    <property type="entry name" value="MoCF_biosynth"/>
    <property type="match status" value="1"/>
</dbReference>
<dbReference type="SUPFAM" id="SSF142433">
    <property type="entry name" value="CinA-like"/>
    <property type="match status" value="1"/>
</dbReference>
<dbReference type="SUPFAM" id="SSF53218">
    <property type="entry name" value="Molybdenum cofactor biosynthesis proteins"/>
    <property type="match status" value="1"/>
</dbReference>
<accession>P46323</accession>
<accession>P94511</accession>
<protein>
    <recommendedName>
        <fullName evidence="1">Putative competence-damage inducible protein</fullName>
    </recommendedName>
</protein>
<gene>
    <name evidence="1" type="primary">cinA</name>
    <name type="synonym">ymfO</name>
    <name type="synonym">yzlB</name>
    <name type="ordered locus">BSU16930</name>
</gene>
<comment type="similarity">
    <text evidence="1">Belongs to the CinA family.</text>
</comment>
<organism>
    <name type="scientific">Bacillus subtilis (strain 168)</name>
    <dbReference type="NCBI Taxonomy" id="224308"/>
    <lineage>
        <taxon>Bacteria</taxon>
        <taxon>Bacillati</taxon>
        <taxon>Bacillota</taxon>
        <taxon>Bacilli</taxon>
        <taxon>Bacillales</taxon>
        <taxon>Bacillaceae</taxon>
        <taxon>Bacillus</taxon>
    </lineage>
</organism>
<name>CINA_BACSU</name>
<proteinExistence type="inferred from homology"/>
<feature type="chain" id="PRO_0000156753" description="Putative competence-damage inducible protein">
    <location>
        <begin position="1"/>
        <end position="416"/>
    </location>
</feature>
<feature type="sequence conflict" description="In Ref. 1; AAB00568." evidence="2" ref="1">
    <original>N</original>
    <variation>H</variation>
    <location>
        <position position="39"/>
    </location>
</feature>
<feature type="sequence conflict" description="In Ref. 1; AAB00568." evidence="2" ref="1">
    <original>F</original>
    <variation>P</variation>
    <location>
        <position position="107"/>
    </location>
</feature>
<feature type="sequence conflict" description="In Ref. 1; AAB00568." evidence="2" ref="1">
    <original>A</original>
    <variation>P</variation>
    <location>
        <position position="199"/>
    </location>
</feature>
<reference key="1">
    <citation type="submission" date="1996-05" db="EMBL/GenBank/DDBJ databases">
        <title>The genetic organisation of the recA chromosomal region in Bacillus subtilis.</title>
        <authorList>
            <person name="Albertini A."/>
            <person name="Caldwell B."/>
            <person name="Caramori T."/>
            <person name="Errington J."/>
            <person name="Foulger D."/>
            <person name="Thomaides H."/>
            <person name="Williams A."/>
        </authorList>
    </citation>
    <scope>NUCLEOTIDE SEQUENCE [GENOMIC DNA]</scope>
    <source>
        <strain>168</strain>
    </source>
</reference>
<reference key="2">
    <citation type="submission" date="1997-01" db="EMBL/GenBank/DDBJ databases">
        <title>Cloning of a putative mdr gene from Bacillus subtilis.</title>
        <authorList>
            <person name="de Rossi E."/>
        </authorList>
    </citation>
    <scope>NUCLEOTIDE SEQUENCE [GENOMIC DNA]</scope>
    <source>
        <strain>PB1831</strain>
    </source>
</reference>
<reference key="3">
    <citation type="journal article" date="1997" name="Nature">
        <title>The complete genome sequence of the Gram-positive bacterium Bacillus subtilis.</title>
        <authorList>
            <person name="Kunst F."/>
            <person name="Ogasawara N."/>
            <person name="Moszer I."/>
            <person name="Albertini A.M."/>
            <person name="Alloni G."/>
            <person name="Azevedo V."/>
            <person name="Bertero M.G."/>
            <person name="Bessieres P."/>
            <person name="Bolotin A."/>
            <person name="Borchert S."/>
            <person name="Borriss R."/>
            <person name="Boursier L."/>
            <person name="Brans A."/>
            <person name="Braun M."/>
            <person name="Brignell S.C."/>
            <person name="Bron S."/>
            <person name="Brouillet S."/>
            <person name="Bruschi C.V."/>
            <person name="Caldwell B."/>
            <person name="Capuano V."/>
            <person name="Carter N.M."/>
            <person name="Choi S.-K."/>
            <person name="Codani J.-J."/>
            <person name="Connerton I.F."/>
            <person name="Cummings N.J."/>
            <person name="Daniel R.A."/>
            <person name="Denizot F."/>
            <person name="Devine K.M."/>
            <person name="Duesterhoeft A."/>
            <person name="Ehrlich S.D."/>
            <person name="Emmerson P.T."/>
            <person name="Entian K.-D."/>
            <person name="Errington J."/>
            <person name="Fabret C."/>
            <person name="Ferrari E."/>
            <person name="Foulger D."/>
            <person name="Fritz C."/>
            <person name="Fujita M."/>
            <person name="Fujita Y."/>
            <person name="Fuma S."/>
            <person name="Galizzi A."/>
            <person name="Galleron N."/>
            <person name="Ghim S.-Y."/>
            <person name="Glaser P."/>
            <person name="Goffeau A."/>
            <person name="Golightly E.J."/>
            <person name="Grandi G."/>
            <person name="Guiseppi G."/>
            <person name="Guy B.J."/>
            <person name="Haga K."/>
            <person name="Haiech J."/>
            <person name="Harwood C.R."/>
            <person name="Henaut A."/>
            <person name="Hilbert H."/>
            <person name="Holsappel S."/>
            <person name="Hosono S."/>
            <person name="Hullo M.-F."/>
            <person name="Itaya M."/>
            <person name="Jones L.-M."/>
            <person name="Joris B."/>
            <person name="Karamata D."/>
            <person name="Kasahara Y."/>
            <person name="Klaerr-Blanchard M."/>
            <person name="Klein C."/>
            <person name="Kobayashi Y."/>
            <person name="Koetter P."/>
            <person name="Koningstein G."/>
            <person name="Krogh S."/>
            <person name="Kumano M."/>
            <person name="Kurita K."/>
            <person name="Lapidus A."/>
            <person name="Lardinois S."/>
            <person name="Lauber J."/>
            <person name="Lazarevic V."/>
            <person name="Lee S.-M."/>
            <person name="Levine A."/>
            <person name="Liu H."/>
            <person name="Masuda S."/>
            <person name="Mauel C."/>
            <person name="Medigue C."/>
            <person name="Medina N."/>
            <person name="Mellado R.P."/>
            <person name="Mizuno M."/>
            <person name="Moestl D."/>
            <person name="Nakai S."/>
            <person name="Noback M."/>
            <person name="Noone D."/>
            <person name="O'Reilly M."/>
            <person name="Ogawa K."/>
            <person name="Ogiwara A."/>
            <person name="Oudega B."/>
            <person name="Park S.-H."/>
            <person name="Parro V."/>
            <person name="Pohl T.M."/>
            <person name="Portetelle D."/>
            <person name="Porwollik S."/>
            <person name="Prescott A.M."/>
            <person name="Presecan E."/>
            <person name="Pujic P."/>
            <person name="Purnelle B."/>
            <person name="Rapoport G."/>
            <person name="Rey M."/>
            <person name="Reynolds S."/>
            <person name="Rieger M."/>
            <person name="Rivolta C."/>
            <person name="Rocha E."/>
            <person name="Roche B."/>
            <person name="Rose M."/>
            <person name="Sadaie Y."/>
            <person name="Sato T."/>
            <person name="Scanlan E."/>
            <person name="Schleich S."/>
            <person name="Schroeter R."/>
            <person name="Scoffone F."/>
            <person name="Sekiguchi J."/>
            <person name="Sekowska A."/>
            <person name="Seror S.J."/>
            <person name="Serror P."/>
            <person name="Shin B.-S."/>
            <person name="Soldo B."/>
            <person name="Sorokin A."/>
            <person name="Tacconi E."/>
            <person name="Takagi T."/>
            <person name="Takahashi H."/>
            <person name="Takemaru K."/>
            <person name="Takeuchi M."/>
            <person name="Tamakoshi A."/>
            <person name="Tanaka T."/>
            <person name="Terpstra P."/>
            <person name="Tognoni A."/>
            <person name="Tosato V."/>
            <person name="Uchiyama S."/>
            <person name="Vandenbol M."/>
            <person name="Vannier F."/>
            <person name="Vassarotti A."/>
            <person name="Viari A."/>
            <person name="Wambutt R."/>
            <person name="Wedler E."/>
            <person name="Wedler H."/>
            <person name="Weitzenegger T."/>
            <person name="Winters P."/>
            <person name="Wipat A."/>
            <person name="Yamamoto H."/>
            <person name="Yamane K."/>
            <person name="Yasumoto K."/>
            <person name="Yata K."/>
            <person name="Yoshida K."/>
            <person name="Yoshikawa H.-F."/>
            <person name="Zumstein E."/>
            <person name="Yoshikawa H."/>
            <person name="Danchin A."/>
        </authorList>
    </citation>
    <scope>NUCLEOTIDE SEQUENCE [LARGE SCALE GENOMIC DNA]</scope>
    <source>
        <strain>168</strain>
    </source>
</reference>
<reference key="4">
    <citation type="journal article" date="2009" name="Microbiology">
        <title>From a consortium sequence to a unified sequence: the Bacillus subtilis 168 reference genome a decade later.</title>
        <authorList>
            <person name="Barbe V."/>
            <person name="Cruveiller S."/>
            <person name="Kunst F."/>
            <person name="Lenoble P."/>
            <person name="Meurice G."/>
            <person name="Sekowska A."/>
            <person name="Vallenet D."/>
            <person name="Wang T."/>
            <person name="Moszer I."/>
            <person name="Medigue C."/>
            <person name="Danchin A."/>
        </authorList>
    </citation>
    <scope>SEQUENCE REVISION TO 39; 107 AND 199</scope>
</reference>
<reference key="5">
    <citation type="journal article" date="1995" name="FEBS Lett.">
        <title>Overexpression of phosphatidylglycerophosphate synthase restores protein translocation in a secG deletion mutant of Escherichia coli at low temperature.</title>
        <authorList>
            <person name="Kontinen V.P."/>
            <person name="Tokuda H."/>
        </authorList>
    </citation>
    <scope>NUCLEOTIDE SEQUENCE [GENOMIC DNA] OF 1-26</scope>
    <source>
        <strain>168 / Marburg / ATCC 6051 / DSM 10 / JCM 1465 / NBRC 13719 / NCIMB 3610 / NRRL NRS-744 / VKM B-501</strain>
    </source>
</reference>
<reference key="6">
    <citation type="journal article" date="1990" name="Nucleic Acids Res.">
        <title>The nucleotide sequence of the recE+ gene of Bacillus subtilis.</title>
        <authorList>
            <person name="Stranathan M.C."/>
            <person name="Bayles K.W."/>
            <person name="Yasbin R.E."/>
        </authorList>
    </citation>
    <scope>NUCLEOTIDE SEQUENCE [GENOMIC DNA] OF 405-416</scope>
    <source>
        <strain>168 / YB886 / BG214</strain>
    </source>
</reference>
<evidence type="ECO:0000255" key="1">
    <source>
        <dbReference type="HAMAP-Rule" id="MF_00226"/>
    </source>
</evidence>
<evidence type="ECO:0000305" key="2"/>